<protein>
    <recommendedName>
        <fullName>Imidazoleglycerol-phosphate dehydratase 1, chloroplastic</fullName>
        <shortName>IGPD 1</shortName>
        <ecNumber evidence="1">4.2.1.19</ecNumber>
    </recommendedName>
</protein>
<accession>P34048</accession>
<accession>A0A1D5UIZ1</accession>
<reference key="1">
    <citation type="journal article" date="2012" name="Nature">
        <title>Analysis of the bread wheat genome using whole-genome shotgun sequencing.</title>
        <authorList>
            <person name="Brenchley R."/>
            <person name="Spannagl M."/>
            <person name="Pfeifer M."/>
            <person name="Barker G.L."/>
            <person name="D'Amore R."/>
            <person name="Allen A.M."/>
            <person name="McKenzie N."/>
            <person name="Kramer M."/>
            <person name="Kerhornou A."/>
            <person name="Bolser D."/>
            <person name="Kay S."/>
            <person name="Waite D."/>
            <person name="Trick M."/>
            <person name="Bancroft I."/>
            <person name="Gu Y."/>
            <person name="Huo N."/>
            <person name="Luo M.C."/>
            <person name="Sehgal S."/>
            <person name="Gill B."/>
            <person name="Kianian S."/>
            <person name="Anderson O."/>
            <person name="Kersey P."/>
            <person name="Dvorak J."/>
            <person name="McCombie W.R."/>
            <person name="Hall A."/>
            <person name="Mayer K.F."/>
            <person name="Edwards K.J."/>
            <person name="Bevan M.W."/>
            <person name="Hall N."/>
        </authorList>
    </citation>
    <scope>NUCLEOTIDE SEQUENCE [LARGE SCALE GENOMIC DNA]</scope>
    <source>
        <strain>cv. Chinese Spring</strain>
    </source>
</reference>
<reference key="2">
    <citation type="submission" date="1993-10" db="EMBL/GenBank/DDBJ databases">
        <authorList>
            <person name="Tada S."/>
            <person name="Volrath S."/>
            <person name="Guyer D."/>
            <person name="Scheidegger A."/>
            <person name="Ryals J."/>
            <person name="Ohta D."/>
            <person name="Ward E."/>
        </authorList>
    </citation>
    <scope>NUCLEOTIDE SEQUENCE [MRNA] OF 75-269</scope>
</reference>
<feature type="transit peptide" description="Chloroplast" evidence="2">
    <location>
        <begin position="1"/>
        <end position="52"/>
    </location>
</feature>
<feature type="chain" id="PRO_0000158256" description="Imidazoleglycerol-phosphate dehydratase 1, chloroplastic">
    <location>
        <begin position="53"/>
        <end position="269"/>
    </location>
</feature>
<feature type="region of interest" description="Disordered" evidence="3">
    <location>
        <begin position="1"/>
        <end position="31"/>
    </location>
</feature>
<feature type="region of interest" description="Disordered" evidence="3">
    <location>
        <begin position="54"/>
        <end position="73"/>
    </location>
</feature>
<feature type="binding site" evidence="1">
    <location>
        <position position="83"/>
    </location>
    <ligand>
        <name>substrate</name>
    </ligand>
</feature>
<feature type="binding site" evidence="1">
    <location>
        <begin position="109"/>
        <end position="117"/>
    </location>
    <ligand>
        <name>substrate</name>
    </ligand>
</feature>
<feature type="binding site" evidence="1">
    <location>
        <position position="109"/>
    </location>
    <ligand>
        <name>Mn(2+)</name>
        <dbReference type="ChEBI" id="CHEBI:29035"/>
        <label>1</label>
    </ligand>
</feature>
<feature type="binding site" evidence="1">
    <location>
        <begin position="135"/>
        <end position="139"/>
    </location>
    <ligand>
        <name>substrate</name>
    </ligand>
</feature>
<feature type="binding site" evidence="1">
    <location>
        <position position="135"/>
    </location>
    <ligand>
        <name>Mn(2+)</name>
        <dbReference type="ChEBI" id="CHEBI:29035"/>
        <label>2</label>
    </ligand>
</feature>
<feature type="binding site" evidence="1">
    <location>
        <position position="136"/>
    </location>
    <ligand>
        <name>Mn(2+)</name>
        <dbReference type="ChEBI" id="CHEBI:29035"/>
        <label>1</label>
    </ligand>
</feature>
<feature type="binding site" evidence="1">
    <location>
        <position position="139"/>
    </location>
    <ligand>
        <name>Mn(2+)</name>
        <dbReference type="ChEBI" id="CHEBI:29035"/>
        <label>2</label>
    </ligand>
</feature>
<feature type="binding site" evidence="1">
    <location>
        <position position="161"/>
    </location>
    <ligand>
        <name>substrate</name>
    </ligand>
</feature>
<feature type="binding site" evidence="1">
    <location>
        <position position="183"/>
    </location>
    <ligand>
        <name>substrate</name>
    </ligand>
</feature>
<feature type="binding site" evidence="1">
    <location>
        <position position="207"/>
    </location>
    <ligand>
        <name>Mn(2+)</name>
        <dbReference type="ChEBI" id="CHEBI:29035"/>
        <label>2</label>
    </ligand>
</feature>
<feature type="binding site" evidence="1">
    <location>
        <begin position="231"/>
        <end position="239"/>
    </location>
    <ligand>
        <name>substrate</name>
    </ligand>
</feature>
<feature type="binding site" evidence="1">
    <location>
        <position position="231"/>
    </location>
    <ligand>
        <name>Mn(2+)</name>
        <dbReference type="ChEBI" id="CHEBI:29035"/>
        <label>1</label>
    </ligand>
</feature>
<feature type="binding site" evidence="1">
    <location>
        <position position="232"/>
    </location>
    <ligand>
        <name>Mn(2+)</name>
        <dbReference type="ChEBI" id="CHEBI:29035"/>
        <label>2</label>
    </ligand>
</feature>
<feature type="binding site" evidence="1">
    <location>
        <position position="235"/>
    </location>
    <ligand>
        <name>Mn(2+)</name>
        <dbReference type="ChEBI" id="CHEBI:29035"/>
        <label>1</label>
    </ligand>
</feature>
<feature type="binding site" evidence="1">
    <location>
        <begin position="261"/>
        <end position="263"/>
    </location>
    <ligand>
        <name>substrate</name>
    </ligand>
</feature>
<feature type="sequence conflict" description="In Ref. 2; AAA93197." evidence="4" ref="2">
    <original>I</original>
    <variation>M</variation>
    <location>
        <position position="259"/>
    </location>
</feature>
<dbReference type="EC" id="4.2.1.19" evidence="1"/>
<dbReference type="EMBL" id="LS480641">
    <property type="protein sequence ID" value="SPT19963.1"/>
    <property type="molecule type" value="Genomic_DNA"/>
</dbReference>
<dbReference type="EMBL" id="U02690">
    <property type="protein sequence ID" value="AAA93197.1"/>
    <property type="status" value="ALT_INIT"/>
    <property type="molecule type" value="mRNA"/>
</dbReference>
<dbReference type="PIR" id="T06261">
    <property type="entry name" value="T06261"/>
</dbReference>
<dbReference type="SMR" id="P34048"/>
<dbReference type="STRING" id="4565.P34048"/>
<dbReference type="EnsemblPlants" id="TraesARI2D03G01279030.1">
    <property type="protein sequence ID" value="TraesARI2D03G01279030.1"/>
    <property type="gene ID" value="TraesARI2D03G01279030"/>
</dbReference>
<dbReference type="EnsemblPlants" id="TraesCS2D02G459900.3">
    <property type="protein sequence ID" value="TraesCS2D02G459900.3"/>
    <property type="gene ID" value="TraesCS2D02G459900"/>
</dbReference>
<dbReference type="EnsemblPlants" id="TraesCS2D03G1026800.3">
    <property type="protein sequence ID" value="TraesCS2D03G1026800.3.CDS"/>
    <property type="gene ID" value="TraesCS2D03G1026800"/>
</dbReference>
<dbReference type="EnsemblPlants" id="TraesJAG2D03G01268400.1">
    <property type="protein sequence ID" value="TraesJAG2D03G01268400.1"/>
    <property type="gene ID" value="TraesJAG2D03G01268400"/>
</dbReference>
<dbReference type="EnsemblPlants" id="TraesJUL2D03G01270620.1">
    <property type="protein sequence ID" value="TraesJUL2D03G01270620.1"/>
    <property type="gene ID" value="TraesJUL2D03G01270620"/>
</dbReference>
<dbReference type="EnsemblPlants" id="TraesKAR2D01G0410740.1">
    <property type="protein sequence ID" value="cds.TraesKAR2D01G0410740.1"/>
    <property type="gene ID" value="TraesKAR2D01G0410740"/>
</dbReference>
<dbReference type="EnsemblPlants" id="TraesLAC2D03G01214210.1">
    <property type="protein sequence ID" value="TraesLAC2D03G01214210.1"/>
    <property type="gene ID" value="TraesLAC2D03G01214210"/>
</dbReference>
<dbReference type="EnsemblPlants" id="TraesLDM2D03G01263700.1">
    <property type="protein sequence ID" value="TraesLDM2D03G01263700.1"/>
    <property type="gene ID" value="TraesLDM2D03G01263700"/>
</dbReference>
<dbReference type="EnsemblPlants" id="TraesMAC2D03G01260650.1">
    <property type="protein sequence ID" value="TraesMAC2D03G01260650.1"/>
    <property type="gene ID" value="TraesMAC2D03G01260650"/>
</dbReference>
<dbReference type="EnsemblPlants" id="TraesNOR2D03G01279090.1">
    <property type="protein sequence ID" value="TraesNOR2D03G01279090.1"/>
    <property type="gene ID" value="TraesNOR2D03G01279090"/>
</dbReference>
<dbReference type="EnsemblPlants" id="TraesPARA_EIv1.0_0736090.1">
    <property type="protein sequence ID" value="TraesPARA_EIv1.0_0736090.1.CDS"/>
    <property type="gene ID" value="TraesPARA_EIv1.0_0736090"/>
</dbReference>
<dbReference type="EnsemblPlants" id="TraesRN2D0101083700.3">
    <property type="protein sequence ID" value="TraesRN2D0101083700.3"/>
    <property type="gene ID" value="TraesRN2D0101083700"/>
</dbReference>
<dbReference type="EnsemblPlants" id="TraesSTA2D03G01251500.1">
    <property type="protein sequence ID" value="TraesSTA2D03G01251500.1"/>
    <property type="gene ID" value="TraesSTA2D03G01251500"/>
</dbReference>
<dbReference type="EnsemblPlants" id="TraesSYM2D03G01278320.1">
    <property type="protein sequence ID" value="TraesSYM2D03G01278320.1"/>
    <property type="gene ID" value="TraesSYM2D03G01278320"/>
</dbReference>
<dbReference type="Gramene" id="TraesARI2D03G01279030.1">
    <property type="protein sequence ID" value="TraesARI2D03G01279030.1"/>
    <property type="gene ID" value="TraesARI2D03G01279030"/>
</dbReference>
<dbReference type="Gramene" id="TraesCS2D02G459900.3">
    <property type="protein sequence ID" value="TraesCS2D02G459900.3"/>
    <property type="gene ID" value="TraesCS2D02G459900"/>
</dbReference>
<dbReference type="Gramene" id="TraesCS2D03G1026800.3">
    <property type="protein sequence ID" value="TraesCS2D03G1026800.3.CDS"/>
    <property type="gene ID" value="TraesCS2D03G1026800"/>
</dbReference>
<dbReference type="Gramene" id="TraesJAG2D03G01268400.1">
    <property type="protein sequence ID" value="TraesJAG2D03G01268400.1"/>
    <property type="gene ID" value="TraesJAG2D03G01268400"/>
</dbReference>
<dbReference type="Gramene" id="TraesJUL2D03G01270620.1">
    <property type="protein sequence ID" value="TraesJUL2D03G01270620.1"/>
    <property type="gene ID" value="TraesJUL2D03G01270620"/>
</dbReference>
<dbReference type="Gramene" id="TraesKAR2D01G0410740.1">
    <property type="protein sequence ID" value="cds.TraesKAR2D01G0410740.1"/>
    <property type="gene ID" value="TraesKAR2D01G0410740"/>
</dbReference>
<dbReference type="Gramene" id="TraesLAC2D03G01214210.1">
    <property type="protein sequence ID" value="TraesLAC2D03G01214210.1"/>
    <property type="gene ID" value="TraesLAC2D03G01214210"/>
</dbReference>
<dbReference type="Gramene" id="TraesLDM2D03G01263700.1">
    <property type="protein sequence ID" value="TraesLDM2D03G01263700.1"/>
    <property type="gene ID" value="TraesLDM2D03G01263700"/>
</dbReference>
<dbReference type="Gramene" id="TraesMAC2D03G01260650.1">
    <property type="protein sequence ID" value="TraesMAC2D03G01260650.1"/>
    <property type="gene ID" value="TraesMAC2D03G01260650"/>
</dbReference>
<dbReference type="Gramene" id="TraesNOR2D03G01279090.1">
    <property type="protein sequence ID" value="TraesNOR2D03G01279090.1"/>
    <property type="gene ID" value="TraesNOR2D03G01279090"/>
</dbReference>
<dbReference type="Gramene" id="TraesPARA_EIv1.0_0736090.1">
    <property type="protein sequence ID" value="TraesPARA_EIv1.0_0736090.1.CDS"/>
    <property type="gene ID" value="TraesPARA_EIv1.0_0736090"/>
</dbReference>
<dbReference type="Gramene" id="TraesRN2D0101083700.3">
    <property type="protein sequence ID" value="TraesRN2D0101083700.3"/>
    <property type="gene ID" value="TraesRN2D0101083700"/>
</dbReference>
<dbReference type="Gramene" id="TraesSTA2D03G01251500.1">
    <property type="protein sequence ID" value="TraesSTA2D03G01251500.1"/>
    <property type="gene ID" value="TraesSTA2D03G01251500"/>
</dbReference>
<dbReference type="Gramene" id="TraesSYM2D03G01278320.1">
    <property type="protein sequence ID" value="TraesSYM2D03G01278320.1"/>
    <property type="gene ID" value="TraesSYM2D03G01278320"/>
</dbReference>
<dbReference type="eggNOG" id="KOG3143">
    <property type="taxonomic scope" value="Eukaryota"/>
</dbReference>
<dbReference type="OMA" id="THVICED"/>
<dbReference type="OrthoDB" id="447729at2759"/>
<dbReference type="UniPathway" id="UPA00031">
    <property type="reaction ID" value="UER00011"/>
</dbReference>
<dbReference type="Proteomes" id="UP000019116">
    <property type="component" value="Chromosome 2D"/>
</dbReference>
<dbReference type="Proteomes" id="UP000280104">
    <property type="component" value="Chromosome ii"/>
</dbReference>
<dbReference type="ExpressionAtlas" id="P34048">
    <property type="expression patterns" value="baseline"/>
</dbReference>
<dbReference type="GO" id="GO:0009507">
    <property type="term" value="C:chloroplast"/>
    <property type="evidence" value="ECO:0007669"/>
    <property type="project" value="UniProtKB-SubCell"/>
</dbReference>
<dbReference type="GO" id="GO:0004424">
    <property type="term" value="F:imidazoleglycerol-phosphate dehydratase activity"/>
    <property type="evidence" value="ECO:0000318"/>
    <property type="project" value="GO_Central"/>
</dbReference>
<dbReference type="GO" id="GO:0046872">
    <property type="term" value="F:metal ion binding"/>
    <property type="evidence" value="ECO:0007669"/>
    <property type="project" value="UniProtKB-KW"/>
</dbReference>
<dbReference type="GO" id="GO:0000105">
    <property type="term" value="P:L-histidine biosynthetic process"/>
    <property type="evidence" value="ECO:0000318"/>
    <property type="project" value="GO_Central"/>
</dbReference>
<dbReference type="CDD" id="cd07914">
    <property type="entry name" value="IGPD"/>
    <property type="match status" value="1"/>
</dbReference>
<dbReference type="FunFam" id="3.30.230.40:FF:000002">
    <property type="entry name" value="Imidazoleglycerol-phosphate dehydratase"/>
    <property type="match status" value="1"/>
</dbReference>
<dbReference type="FunFam" id="3.30.230.40:FF:000003">
    <property type="entry name" value="Imidazoleglycerol-phosphate dehydratase HisB"/>
    <property type="match status" value="1"/>
</dbReference>
<dbReference type="Gene3D" id="3.30.230.40">
    <property type="entry name" value="Imidazole glycerol phosphate dehydratase, domain 1"/>
    <property type="match status" value="2"/>
</dbReference>
<dbReference type="HAMAP" id="MF_00076">
    <property type="entry name" value="HisB"/>
    <property type="match status" value="1"/>
</dbReference>
<dbReference type="InterPro" id="IPR038494">
    <property type="entry name" value="IGPD_sf"/>
</dbReference>
<dbReference type="InterPro" id="IPR000807">
    <property type="entry name" value="ImidazoleglycerolP_deHydtase"/>
</dbReference>
<dbReference type="InterPro" id="IPR020565">
    <property type="entry name" value="ImidazoleglycerP_deHydtase_CS"/>
</dbReference>
<dbReference type="InterPro" id="IPR020568">
    <property type="entry name" value="Ribosomal_Su5_D2-typ_SF"/>
</dbReference>
<dbReference type="NCBIfam" id="NF002108">
    <property type="entry name" value="PRK00951.1-3"/>
    <property type="match status" value="1"/>
</dbReference>
<dbReference type="NCBIfam" id="NF002111">
    <property type="entry name" value="PRK00951.2-1"/>
    <property type="match status" value="1"/>
</dbReference>
<dbReference type="NCBIfam" id="NF002114">
    <property type="entry name" value="PRK00951.2-4"/>
    <property type="match status" value="1"/>
</dbReference>
<dbReference type="PANTHER" id="PTHR23133:SF2">
    <property type="entry name" value="IMIDAZOLEGLYCEROL-PHOSPHATE DEHYDRATASE"/>
    <property type="match status" value="1"/>
</dbReference>
<dbReference type="PANTHER" id="PTHR23133">
    <property type="entry name" value="IMIDAZOLEGLYCEROL-PHOSPHATE DEHYDRATASE HIS7"/>
    <property type="match status" value="1"/>
</dbReference>
<dbReference type="Pfam" id="PF00475">
    <property type="entry name" value="IGPD"/>
    <property type="match status" value="1"/>
</dbReference>
<dbReference type="SUPFAM" id="SSF54211">
    <property type="entry name" value="Ribosomal protein S5 domain 2-like"/>
    <property type="match status" value="2"/>
</dbReference>
<dbReference type="PROSITE" id="PS00954">
    <property type="entry name" value="IGP_DEHYDRATASE_1"/>
    <property type="match status" value="1"/>
</dbReference>
<dbReference type="PROSITE" id="PS00955">
    <property type="entry name" value="IGP_DEHYDRATASE_2"/>
    <property type="match status" value="1"/>
</dbReference>
<comment type="catalytic activity">
    <reaction evidence="1">
        <text>D-erythro-1-(imidazol-4-yl)glycerol 3-phosphate = 3-(imidazol-4-yl)-2-oxopropyl phosphate + H2O</text>
        <dbReference type="Rhea" id="RHEA:11040"/>
        <dbReference type="ChEBI" id="CHEBI:15377"/>
        <dbReference type="ChEBI" id="CHEBI:57766"/>
        <dbReference type="ChEBI" id="CHEBI:58278"/>
        <dbReference type="EC" id="4.2.1.19"/>
    </reaction>
</comment>
<comment type="cofactor">
    <cofactor evidence="1">
        <name>Mn(2+)</name>
        <dbReference type="ChEBI" id="CHEBI:29035"/>
    </cofactor>
    <text evidence="1">Binds 2 manganese ions per subunit.</text>
</comment>
<comment type="pathway">
    <text evidence="1">Amino-acid biosynthesis; L-histidine biosynthesis; L-histidine from 5-phospho-alpha-D-ribose 1-diphosphate: step 6/9.</text>
</comment>
<comment type="subcellular location">
    <subcellularLocation>
        <location evidence="2">Plastid</location>
        <location evidence="2">Chloroplast</location>
    </subcellularLocation>
</comment>
<comment type="similarity">
    <text evidence="4">Belongs to the imidazoleglycerol-phosphate dehydratase family.</text>
</comment>
<comment type="sequence caution" evidence="4">
    <conflict type="erroneous initiation">
        <sequence resource="EMBL-CDS" id="AAA93197"/>
    </conflict>
    <text>Truncated N-terminus.</text>
</comment>
<keyword id="KW-0028">Amino-acid biosynthesis</keyword>
<keyword id="KW-0150">Chloroplast</keyword>
<keyword id="KW-0368">Histidine biosynthesis</keyword>
<keyword id="KW-0456">Lyase</keyword>
<keyword id="KW-0464">Manganese</keyword>
<keyword id="KW-0479">Metal-binding</keyword>
<keyword id="KW-0934">Plastid</keyword>
<keyword id="KW-1185">Reference proteome</keyword>
<keyword id="KW-0809">Transit peptide</keyword>
<sequence>MTTAPFVSPSLPRLHSARASPFPKPSVGSGGGVAFPARTYGSSLRLRSAVMSASGVGGNGSPMAPEESTVSSRLGEVKRVTKETNVHVKINLDGTGVANSSTGIPFLDHMLDQLASHGLFDVYVKATGDTHIDDHHSNEDIALAIGTALLQALGDRKGINRFGHFTAPLDEAAVEVILDLSGRPHLSCGLSIPTERVGTYDTQLVEHFFQSLVNTSGMTLHIRQLAGNNSHHIIEATFKAFARALRQATEYDLRRQGTIPSSKGVLSRS</sequence>
<name>HIS7A_WHEAT</name>
<gene>
    <name evidence="5" type="ORF">CAMPLR22A2D_LOCUS4590</name>
</gene>
<evidence type="ECO:0000250" key="1">
    <source>
        <dbReference type="UniProtKB" id="O23346"/>
    </source>
</evidence>
<evidence type="ECO:0000255" key="2"/>
<evidence type="ECO:0000256" key="3">
    <source>
        <dbReference type="SAM" id="MobiDB-lite"/>
    </source>
</evidence>
<evidence type="ECO:0000305" key="4"/>
<evidence type="ECO:0000312" key="5">
    <source>
        <dbReference type="EMBL" id="SPT19963.1"/>
    </source>
</evidence>
<proteinExistence type="evidence at transcript level"/>
<organism>
    <name type="scientific">Triticum aestivum</name>
    <name type="common">Wheat</name>
    <dbReference type="NCBI Taxonomy" id="4565"/>
    <lineage>
        <taxon>Eukaryota</taxon>
        <taxon>Viridiplantae</taxon>
        <taxon>Streptophyta</taxon>
        <taxon>Embryophyta</taxon>
        <taxon>Tracheophyta</taxon>
        <taxon>Spermatophyta</taxon>
        <taxon>Magnoliopsida</taxon>
        <taxon>Liliopsida</taxon>
        <taxon>Poales</taxon>
        <taxon>Poaceae</taxon>
        <taxon>BOP clade</taxon>
        <taxon>Pooideae</taxon>
        <taxon>Triticodae</taxon>
        <taxon>Triticeae</taxon>
        <taxon>Triticinae</taxon>
        <taxon>Triticum</taxon>
    </lineage>
</organism>